<dbReference type="EMBL" id="CP001598">
    <property type="protein sequence ID" value="ACQ47684.1"/>
    <property type="molecule type" value="Genomic_DNA"/>
</dbReference>
<dbReference type="RefSeq" id="WP_000196009.1">
    <property type="nucleotide sequence ID" value="NC_012659.1"/>
</dbReference>
<dbReference type="SMR" id="C3P5H5"/>
<dbReference type="GeneID" id="45023598"/>
<dbReference type="KEGG" id="bai:BAA_3930"/>
<dbReference type="HOGENOM" id="CLU_002472_3_1_9"/>
<dbReference type="GO" id="GO:0005829">
    <property type="term" value="C:cytosol"/>
    <property type="evidence" value="ECO:0007669"/>
    <property type="project" value="TreeGrafter"/>
</dbReference>
<dbReference type="GO" id="GO:0005524">
    <property type="term" value="F:ATP binding"/>
    <property type="evidence" value="ECO:0007669"/>
    <property type="project" value="UniProtKB-UniRule"/>
</dbReference>
<dbReference type="GO" id="GO:0140664">
    <property type="term" value="F:ATP-dependent DNA damage sensor activity"/>
    <property type="evidence" value="ECO:0007669"/>
    <property type="project" value="InterPro"/>
</dbReference>
<dbReference type="GO" id="GO:0003684">
    <property type="term" value="F:damaged DNA binding"/>
    <property type="evidence" value="ECO:0007669"/>
    <property type="project" value="UniProtKB-UniRule"/>
</dbReference>
<dbReference type="GO" id="GO:0030983">
    <property type="term" value="F:mismatched DNA binding"/>
    <property type="evidence" value="ECO:0007669"/>
    <property type="project" value="InterPro"/>
</dbReference>
<dbReference type="GO" id="GO:0006298">
    <property type="term" value="P:mismatch repair"/>
    <property type="evidence" value="ECO:0007669"/>
    <property type="project" value="UniProtKB-UniRule"/>
</dbReference>
<dbReference type="CDD" id="cd03284">
    <property type="entry name" value="ABC_MutS1"/>
    <property type="match status" value="1"/>
</dbReference>
<dbReference type="FunFam" id="1.10.1420.10:FF:000007">
    <property type="entry name" value="DNA mismatch repair protein MutS"/>
    <property type="match status" value="1"/>
</dbReference>
<dbReference type="FunFam" id="3.30.420.110:FF:000007">
    <property type="entry name" value="DNA mismatch repair protein MutS"/>
    <property type="match status" value="1"/>
</dbReference>
<dbReference type="FunFam" id="3.40.1170.10:FF:000001">
    <property type="entry name" value="DNA mismatch repair protein MutS"/>
    <property type="match status" value="1"/>
</dbReference>
<dbReference type="FunFam" id="3.40.50.300:FF:000896">
    <property type="entry name" value="DNA mismatch repair protein MutS"/>
    <property type="match status" value="1"/>
</dbReference>
<dbReference type="Gene3D" id="1.10.1420.10">
    <property type="match status" value="2"/>
</dbReference>
<dbReference type="Gene3D" id="3.40.1170.10">
    <property type="entry name" value="DNA repair protein MutS, domain I"/>
    <property type="match status" value="1"/>
</dbReference>
<dbReference type="Gene3D" id="3.30.420.110">
    <property type="entry name" value="MutS, connector domain"/>
    <property type="match status" value="1"/>
</dbReference>
<dbReference type="Gene3D" id="3.40.50.300">
    <property type="entry name" value="P-loop containing nucleotide triphosphate hydrolases"/>
    <property type="match status" value="1"/>
</dbReference>
<dbReference type="HAMAP" id="MF_00096">
    <property type="entry name" value="MutS"/>
    <property type="match status" value="1"/>
</dbReference>
<dbReference type="InterPro" id="IPR005748">
    <property type="entry name" value="DNA_mismatch_repair_MutS"/>
</dbReference>
<dbReference type="InterPro" id="IPR007695">
    <property type="entry name" value="DNA_mismatch_repair_MutS-lik_N"/>
</dbReference>
<dbReference type="InterPro" id="IPR017261">
    <property type="entry name" value="DNA_mismatch_repair_MutS/MSH"/>
</dbReference>
<dbReference type="InterPro" id="IPR000432">
    <property type="entry name" value="DNA_mismatch_repair_MutS_C"/>
</dbReference>
<dbReference type="InterPro" id="IPR007861">
    <property type="entry name" value="DNA_mismatch_repair_MutS_clamp"/>
</dbReference>
<dbReference type="InterPro" id="IPR007696">
    <property type="entry name" value="DNA_mismatch_repair_MutS_core"/>
</dbReference>
<dbReference type="InterPro" id="IPR016151">
    <property type="entry name" value="DNA_mismatch_repair_MutS_N"/>
</dbReference>
<dbReference type="InterPro" id="IPR036187">
    <property type="entry name" value="DNA_mismatch_repair_MutS_sf"/>
</dbReference>
<dbReference type="InterPro" id="IPR007860">
    <property type="entry name" value="DNA_mmatch_repair_MutS_con_dom"/>
</dbReference>
<dbReference type="InterPro" id="IPR045076">
    <property type="entry name" value="MutS"/>
</dbReference>
<dbReference type="InterPro" id="IPR036678">
    <property type="entry name" value="MutS_con_dom_sf"/>
</dbReference>
<dbReference type="InterPro" id="IPR027417">
    <property type="entry name" value="P-loop_NTPase"/>
</dbReference>
<dbReference type="NCBIfam" id="TIGR01070">
    <property type="entry name" value="mutS1"/>
    <property type="match status" value="1"/>
</dbReference>
<dbReference type="NCBIfam" id="NF003810">
    <property type="entry name" value="PRK05399.1"/>
    <property type="match status" value="1"/>
</dbReference>
<dbReference type="PANTHER" id="PTHR11361:SF34">
    <property type="entry name" value="DNA MISMATCH REPAIR PROTEIN MSH1, MITOCHONDRIAL"/>
    <property type="match status" value="1"/>
</dbReference>
<dbReference type="PANTHER" id="PTHR11361">
    <property type="entry name" value="DNA MISMATCH REPAIR PROTEIN MUTS FAMILY MEMBER"/>
    <property type="match status" value="1"/>
</dbReference>
<dbReference type="Pfam" id="PF01624">
    <property type="entry name" value="MutS_I"/>
    <property type="match status" value="1"/>
</dbReference>
<dbReference type="Pfam" id="PF05188">
    <property type="entry name" value="MutS_II"/>
    <property type="match status" value="1"/>
</dbReference>
<dbReference type="Pfam" id="PF05192">
    <property type="entry name" value="MutS_III"/>
    <property type="match status" value="1"/>
</dbReference>
<dbReference type="Pfam" id="PF05190">
    <property type="entry name" value="MutS_IV"/>
    <property type="match status" value="1"/>
</dbReference>
<dbReference type="Pfam" id="PF00488">
    <property type="entry name" value="MutS_V"/>
    <property type="match status" value="1"/>
</dbReference>
<dbReference type="PIRSF" id="PIRSF037677">
    <property type="entry name" value="DNA_mis_repair_Msh6"/>
    <property type="match status" value="1"/>
</dbReference>
<dbReference type="SMART" id="SM00534">
    <property type="entry name" value="MUTSac"/>
    <property type="match status" value="1"/>
</dbReference>
<dbReference type="SMART" id="SM00533">
    <property type="entry name" value="MUTSd"/>
    <property type="match status" value="1"/>
</dbReference>
<dbReference type="SUPFAM" id="SSF55271">
    <property type="entry name" value="DNA repair protein MutS, domain I"/>
    <property type="match status" value="1"/>
</dbReference>
<dbReference type="SUPFAM" id="SSF53150">
    <property type="entry name" value="DNA repair protein MutS, domain II"/>
    <property type="match status" value="1"/>
</dbReference>
<dbReference type="SUPFAM" id="SSF48334">
    <property type="entry name" value="DNA repair protein MutS, domain III"/>
    <property type="match status" value="1"/>
</dbReference>
<dbReference type="SUPFAM" id="SSF52540">
    <property type="entry name" value="P-loop containing nucleoside triphosphate hydrolases"/>
    <property type="match status" value="1"/>
</dbReference>
<dbReference type="PROSITE" id="PS00486">
    <property type="entry name" value="DNA_MISMATCH_REPAIR_2"/>
    <property type="match status" value="1"/>
</dbReference>
<gene>
    <name evidence="1" type="primary">mutS</name>
    <name type="ordered locus">BAA_3930</name>
</gene>
<accession>C3P5H5</accession>
<name>MUTS_BACAA</name>
<keyword id="KW-0067">ATP-binding</keyword>
<keyword id="KW-0227">DNA damage</keyword>
<keyword id="KW-0234">DNA repair</keyword>
<keyword id="KW-0238">DNA-binding</keyword>
<keyword id="KW-0547">Nucleotide-binding</keyword>
<feature type="chain" id="PRO_1000192194" description="DNA mismatch repair protein MutS">
    <location>
        <begin position="1"/>
        <end position="892"/>
    </location>
</feature>
<feature type="region of interest" description="Disordered" evidence="2">
    <location>
        <begin position="833"/>
        <end position="855"/>
    </location>
</feature>
<feature type="compositionally biased region" description="Basic and acidic residues" evidence="2">
    <location>
        <begin position="845"/>
        <end position="855"/>
    </location>
</feature>
<feature type="binding site" evidence="1">
    <location>
        <begin position="607"/>
        <end position="614"/>
    </location>
    <ligand>
        <name>ATP</name>
        <dbReference type="ChEBI" id="CHEBI:30616"/>
    </ligand>
</feature>
<organism>
    <name type="scientific">Bacillus anthracis (strain A0248)</name>
    <dbReference type="NCBI Taxonomy" id="592021"/>
    <lineage>
        <taxon>Bacteria</taxon>
        <taxon>Bacillati</taxon>
        <taxon>Bacillota</taxon>
        <taxon>Bacilli</taxon>
        <taxon>Bacillales</taxon>
        <taxon>Bacillaceae</taxon>
        <taxon>Bacillus</taxon>
        <taxon>Bacillus cereus group</taxon>
    </lineage>
</organism>
<protein>
    <recommendedName>
        <fullName evidence="1">DNA mismatch repair protein MutS</fullName>
    </recommendedName>
</protein>
<sequence length="892" mass="101098">MTQYTPMIQQYLKVKADYQDAFLFFRLGDFYEMFFEDAVKAAHELEITLTSRDGGSSERIPMCGVPYHAAKNYIEQLVEKGYKVAVCEQVEDPKTAKGVVRREVVQLITPGTMMEGRTIDEKENNFLAALTHFEDGSYALACNDLTTGQNTVTLLTGSVEDILLEVYATGSKEIVVDSSFSKDELNKLTETLKMTISYEDATAIPEGLEHLVKNVSQAKLIKAVGRLFNYVIRTQKRSLDHLQPVEIYYTNQFMKIDVHSKRNLELTETLRTKEKTGSLLWLLDKTKTAMGGRMLKQWMERPLIQKERIEERLEMVETFVNDYFLREDLKEKLKEVYDLERLAGKVAFGNVNARDLLQLRRSLLQVPAILEAISLLDNAYAARLIQGADPCESLTELLGRSIQENPPLSIKDGDIIKDGYNDKLDQYRYVSKNGKTWIAELEKRERDITGIKSLKIGYNRIFGYYIEVTKANLGALPEGRYERKQTLANAERFITDELKEKETLILEAEEKIVQLEYDLFTALREEVKVFIPKLQHLAKVISELDVLQSFATVSEEEQFVKPVLTTKREIFIKDGRHPVVEKVLNGKLYVPNDCIMPENMDVFLITGPNMSGKSTYMRQLALVTVMSQIGCFVPATEAVLPVFDQIFTRIGAADDLISGQSTFMVEMLEAKNAIANASERSLILFDEIGRGTSTYDGMALAQAIIEHIHDQIGAKTLFSTHYHELTVLEDSLDQLKNVHVSAIEENGKVVFLHKIQDGAADKSYGIHVAQLAELPDSLIARAKEVLAQLEGQEEIVIPKRVEVKAQEQEVIPEPIVVKEEPIEIEETKVDNEEESQLSFFGAEQSSKKQDKPALDAKETAVLTQIKKIDLLDMTPLEAMNELYRLQKKLKKG</sequence>
<reference key="1">
    <citation type="submission" date="2009-04" db="EMBL/GenBank/DDBJ databases">
        <title>Genome sequence of Bacillus anthracis A0248.</title>
        <authorList>
            <person name="Dodson R.J."/>
            <person name="Munk A.C."/>
            <person name="Bruce D."/>
            <person name="Detter C."/>
            <person name="Tapia R."/>
            <person name="Sutton G."/>
            <person name="Sims D."/>
            <person name="Brettin T."/>
        </authorList>
    </citation>
    <scope>NUCLEOTIDE SEQUENCE [LARGE SCALE GENOMIC DNA]</scope>
    <source>
        <strain>A0248</strain>
    </source>
</reference>
<evidence type="ECO:0000255" key="1">
    <source>
        <dbReference type="HAMAP-Rule" id="MF_00096"/>
    </source>
</evidence>
<evidence type="ECO:0000256" key="2">
    <source>
        <dbReference type="SAM" id="MobiDB-lite"/>
    </source>
</evidence>
<proteinExistence type="inferred from homology"/>
<comment type="function">
    <text evidence="1">This protein is involved in the repair of mismatches in DNA. It is possible that it carries out the mismatch recognition step. This protein has a weak ATPase activity.</text>
</comment>
<comment type="similarity">
    <text evidence="1">Belongs to the DNA mismatch repair MutS family.</text>
</comment>